<dbReference type="EC" id="2.5.1.7" evidence="1"/>
<dbReference type="EMBL" id="CP001001">
    <property type="protein sequence ID" value="ACB25486.1"/>
    <property type="molecule type" value="Genomic_DNA"/>
</dbReference>
<dbReference type="RefSeq" id="WP_012320447.1">
    <property type="nucleotide sequence ID" value="NC_010505.1"/>
</dbReference>
<dbReference type="SMR" id="B1LUQ0"/>
<dbReference type="STRING" id="426355.Mrad2831_3509"/>
<dbReference type="GeneID" id="6139562"/>
<dbReference type="KEGG" id="mrd:Mrad2831_3509"/>
<dbReference type="eggNOG" id="COG0766">
    <property type="taxonomic scope" value="Bacteria"/>
</dbReference>
<dbReference type="HOGENOM" id="CLU_027387_0_0_5"/>
<dbReference type="OrthoDB" id="9803760at2"/>
<dbReference type="UniPathway" id="UPA00219"/>
<dbReference type="Proteomes" id="UP000006589">
    <property type="component" value="Chromosome"/>
</dbReference>
<dbReference type="GO" id="GO:0005737">
    <property type="term" value="C:cytoplasm"/>
    <property type="evidence" value="ECO:0007669"/>
    <property type="project" value="UniProtKB-SubCell"/>
</dbReference>
<dbReference type="GO" id="GO:0008760">
    <property type="term" value="F:UDP-N-acetylglucosamine 1-carboxyvinyltransferase activity"/>
    <property type="evidence" value="ECO:0007669"/>
    <property type="project" value="UniProtKB-UniRule"/>
</dbReference>
<dbReference type="GO" id="GO:0051301">
    <property type="term" value="P:cell division"/>
    <property type="evidence" value="ECO:0007669"/>
    <property type="project" value="UniProtKB-KW"/>
</dbReference>
<dbReference type="GO" id="GO:0071555">
    <property type="term" value="P:cell wall organization"/>
    <property type="evidence" value="ECO:0007669"/>
    <property type="project" value="UniProtKB-KW"/>
</dbReference>
<dbReference type="GO" id="GO:0009252">
    <property type="term" value="P:peptidoglycan biosynthetic process"/>
    <property type="evidence" value="ECO:0007669"/>
    <property type="project" value="UniProtKB-UniRule"/>
</dbReference>
<dbReference type="GO" id="GO:0008360">
    <property type="term" value="P:regulation of cell shape"/>
    <property type="evidence" value="ECO:0007669"/>
    <property type="project" value="UniProtKB-KW"/>
</dbReference>
<dbReference type="GO" id="GO:0019277">
    <property type="term" value="P:UDP-N-acetylgalactosamine biosynthetic process"/>
    <property type="evidence" value="ECO:0007669"/>
    <property type="project" value="InterPro"/>
</dbReference>
<dbReference type="CDD" id="cd01555">
    <property type="entry name" value="UdpNAET"/>
    <property type="match status" value="1"/>
</dbReference>
<dbReference type="FunFam" id="3.65.10.10:FF:000001">
    <property type="entry name" value="UDP-N-acetylglucosamine 1-carboxyvinyltransferase"/>
    <property type="match status" value="1"/>
</dbReference>
<dbReference type="Gene3D" id="3.65.10.10">
    <property type="entry name" value="Enolpyruvate transferase domain"/>
    <property type="match status" value="2"/>
</dbReference>
<dbReference type="HAMAP" id="MF_00111">
    <property type="entry name" value="MurA"/>
    <property type="match status" value="1"/>
</dbReference>
<dbReference type="InterPro" id="IPR001986">
    <property type="entry name" value="Enolpyruvate_Tfrase_dom"/>
</dbReference>
<dbReference type="InterPro" id="IPR036968">
    <property type="entry name" value="Enolpyruvate_Tfrase_sf"/>
</dbReference>
<dbReference type="InterPro" id="IPR050068">
    <property type="entry name" value="MurA_subfamily"/>
</dbReference>
<dbReference type="InterPro" id="IPR013792">
    <property type="entry name" value="RNA3'P_cycl/enolpyr_Trfase_a/b"/>
</dbReference>
<dbReference type="InterPro" id="IPR005750">
    <property type="entry name" value="UDP_GlcNAc_COvinyl_MurA"/>
</dbReference>
<dbReference type="NCBIfam" id="TIGR01072">
    <property type="entry name" value="murA"/>
    <property type="match status" value="1"/>
</dbReference>
<dbReference type="NCBIfam" id="NF006873">
    <property type="entry name" value="PRK09369.1"/>
    <property type="match status" value="1"/>
</dbReference>
<dbReference type="PANTHER" id="PTHR43783">
    <property type="entry name" value="UDP-N-ACETYLGLUCOSAMINE 1-CARBOXYVINYLTRANSFERASE"/>
    <property type="match status" value="1"/>
</dbReference>
<dbReference type="PANTHER" id="PTHR43783:SF1">
    <property type="entry name" value="UDP-N-ACETYLGLUCOSAMINE 1-CARBOXYVINYLTRANSFERASE"/>
    <property type="match status" value="1"/>
</dbReference>
<dbReference type="Pfam" id="PF00275">
    <property type="entry name" value="EPSP_synthase"/>
    <property type="match status" value="1"/>
</dbReference>
<dbReference type="SUPFAM" id="SSF55205">
    <property type="entry name" value="EPT/RTPC-like"/>
    <property type="match status" value="1"/>
</dbReference>
<reference key="1">
    <citation type="submission" date="2008-03" db="EMBL/GenBank/DDBJ databases">
        <title>Complete sequence of chromosome of Methylobacterium radiotolerans JCM 2831.</title>
        <authorList>
            <consortium name="US DOE Joint Genome Institute"/>
            <person name="Copeland A."/>
            <person name="Lucas S."/>
            <person name="Lapidus A."/>
            <person name="Glavina del Rio T."/>
            <person name="Dalin E."/>
            <person name="Tice H."/>
            <person name="Bruce D."/>
            <person name="Goodwin L."/>
            <person name="Pitluck S."/>
            <person name="Kiss H."/>
            <person name="Brettin T."/>
            <person name="Detter J.C."/>
            <person name="Han C."/>
            <person name="Kuske C.R."/>
            <person name="Schmutz J."/>
            <person name="Larimer F."/>
            <person name="Land M."/>
            <person name="Hauser L."/>
            <person name="Kyrpides N."/>
            <person name="Mikhailova N."/>
            <person name="Marx C.J."/>
            <person name="Richardson P."/>
        </authorList>
    </citation>
    <scope>NUCLEOTIDE SEQUENCE [LARGE SCALE GENOMIC DNA]</scope>
    <source>
        <strain>ATCC 27329 / DSM 1819 / JCM 2831 / NBRC 15690 / NCIMB 10815 / 0-1</strain>
    </source>
</reference>
<feature type="chain" id="PRO_1000094702" description="UDP-N-acetylglucosamine 1-carboxyvinyltransferase">
    <location>
        <begin position="1"/>
        <end position="429"/>
    </location>
</feature>
<feature type="active site" description="Proton donor" evidence="1">
    <location>
        <position position="126"/>
    </location>
</feature>
<feature type="binding site" evidence="1">
    <location>
        <begin position="22"/>
        <end position="23"/>
    </location>
    <ligand>
        <name>phosphoenolpyruvate</name>
        <dbReference type="ChEBI" id="CHEBI:58702"/>
    </ligand>
</feature>
<feature type="binding site" evidence="1">
    <location>
        <position position="102"/>
    </location>
    <ligand>
        <name>UDP-N-acetyl-alpha-D-glucosamine</name>
        <dbReference type="ChEBI" id="CHEBI:57705"/>
    </ligand>
</feature>
<feature type="binding site" evidence="1">
    <location>
        <begin position="131"/>
        <end position="135"/>
    </location>
    <ligand>
        <name>UDP-N-acetyl-alpha-D-glucosamine</name>
        <dbReference type="ChEBI" id="CHEBI:57705"/>
    </ligand>
</feature>
<feature type="binding site" evidence="1">
    <location>
        <position position="316"/>
    </location>
    <ligand>
        <name>UDP-N-acetyl-alpha-D-glucosamine</name>
        <dbReference type="ChEBI" id="CHEBI:57705"/>
    </ligand>
</feature>
<feature type="binding site" evidence="1">
    <location>
        <position position="338"/>
    </location>
    <ligand>
        <name>UDP-N-acetyl-alpha-D-glucosamine</name>
        <dbReference type="ChEBI" id="CHEBI:57705"/>
    </ligand>
</feature>
<feature type="modified residue" description="2-(S-cysteinyl)pyruvic acid O-phosphothioketal" evidence="1">
    <location>
        <position position="126"/>
    </location>
</feature>
<protein>
    <recommendedName>
        <fullName evidence="1">UDP-N-acetylglucosamine 1-carboxyvinyltransferase</fullName>
        <ecNumber evidence="1">2.5.1.7</ecNumber>
    </recommendedName>
    <alternativeName>
        <fullName evidence="1">Enoylpyruvate transferase</fullName>
    </alternativeName>
    <alternativeName>
        <fullName evidence="1">UDP-N-acetylglucosamine enolpyruvyl transferase</fullName>
        <shortName evidence="1">EPT</shortName>
    </alternativeName>
</protein>
<gene>
    <name evidence="1" type="primary">murA</name>
    <name type="ordered locus">Mrad2831_3509</name>
</gene>
<sequence length="429" mass="45343">MDRIHITGGAPLNGVIPISGAKNAALPLMIASLLTGETLELINVPRLADIAALTRILGNHGVDHMVVGKRPGQTTETGQTIRLTASNVIDTTAPYELVSTMRASFWVVAPLLARFGEAKVSLPGGCAIGTRPVDLLIMALERLGAEIEIDAGYVVARTKNGLRGAEIAFPKVTVGGTHVALMAAALAYGTTVLENAAREPEVVDLAECLNKMGAKIRGAGTPRIEIEGVARLNGARHEVLPDRIETGTYAMAVAMAGGDVVLKDTRADLLHSALDVLSTTGAEITQVEGGIRVRRNGGGIAAVDITTDPFPGFPTDLQAQFMALMTLAKGQSHIRETIFENRFMHVQELARLGAKIRLEGDLAIVEGVDRLKGAPVMATDLRASVSLVIAGLAAEGETQINRVYHLDRGFEALEAKLGRCGAQIERVRA</sequence>
<accession>B1LUQ0</accession>
<evidence type="ECO:0000255" key="1">
    <source>
        <dbReference type="HAMAP-Rule" id="MF_00111"/>
    </source>
</evidence>
<organism>
    <name type="scientific">Methylobacterium radiotolerans (strain ATCC 27329 / DSM 1819 / JCM 2831 / NBRC 15690 / NCIMB 10815 / 0-1)</name>
    <dbReference type="NCBI Taxonomy" id="426355"/>
    <lineage>
        <taxon>Bacteria</taxon>
        <taxon>Pseudomonadati</taxon>
        <taxon>Pseudomonadota</taxon>
        <taxon>Alphaproteobacteria</taxon>
        <taxon>Hyphomicrobiales</taxon>
        <taxon>Methylobacteriaceae</taxon>
        <taxon>Methylobacterium</taxon>
    </lineage>
</organism>
<proteinExistence type="inferred from homology"/>
<comment type="function">
    <text evidence="1">Cell wall formation. Adds enolpyruvyl to UDP-N-acetylglucosamine.</text>
</comment>
<comment type="catalytic activity">
    <reaction evidence="1">
        <text>phosphoenolpyruvate + UDP-N-acetyl-alpha-D-glucosamine = UDP-N-acetyl-3-O-(1-carboxyvinyl)-alpha-D-glucosamine + phosphate</text>
        <dbReference type="Rhea" id="RHEA:18681"/>
        <dbReference type="ChEBI" id="CHEBI:43474"/>
        <dbReference type="ChEBI" id="CHEBI:57705"/>
        <dbReference type="ChEBI" id="CHEBI:58702"/>
        <dbReference type="ChEBI" id="CHEBI:68483"/>
        <dbReference type="EC" id="2.5.1.7"/>
    </reaction>
</comment>
<comment type="pathway">
    <text evidence="1">Cell wall biogenesis; peptidoglycan biosynthesis.</text>
</comment>
<comment type="subcellular location">
    <subcellularLocation>
        <location evidence="1">Cytoplasm</location>
    </subcellularLocation>
</comment>
<comment type="similarity">
    <text evidence="1">Belongs to the EPSP synthase family. MurA subfamily.</text>
</comment>
<keyword id="KW-0131">Cell cycle</keyword>
<keyword id="KW-0132">Cell division</keyword>
<keyword id="KW-0133">Cell shape</keyword>
<keyword id="KW-0961">Cell wall biogenesis/degradation</keyword>
<keyword id="KW-0963">Cytoplasm</keyword>
<keyword id="KW-0573">Peptidoglycan synthesis</keyword>
<keyword id="KW-0670">Pyruvate</keyword>
<keyword id="KW-0808">Transferase</keyword>
<name>MURA_METRJ</name>